<reference key="1">
    <citation type="journal article" date="1998" name="Nature">
        <title>Deciphering the biology of Mycobacterium tuberculosis from the complete genome sequence.</title>
        <authorList>
            <person name="Cole S.T."/>
            <person name="Brosch R."/>
            <person name="Parkhill J."/>
            <person name="Garnier T."/>
            <person name="Churcher C.M."/>
            <person name="Harris D.E."/>
            <person name="Gordon S.V."/>
            <person name="Eiglmeier K."/>
            <person name="Gas S."/>
            <person name="Barry C.E. III"/>
            <person name="Tekaia F."/>
            <person name="Badcock K."/>
            <person name="Basham D."/>
            <person name="Brown D."/>
            <person name="Chillingworth T."/>
            <person name="Connor R."/>
            <person name="Davies R.M."/>
            <person name="Devlin K."/>
            <person name="Feltwell T."/>
            <person name="Gentles S."/>
            <person name="Hamlin N."/>
            <person name="Holroyd S."/>
            <person name="Hornsby T."/>
            <person name="Jagels K."/>
            <person name="Krogh A."/>
            <person name="McLean J."/>
            <person name="Moule S."/>
            <person name="Murphy L.D."/>
            <person name="Oliver S."/>
            <person name="Osborne J."/>
            <person name="Quail M.A."/>
            <person name="Rajandream M.A."/>
            <person name="Rogers J."/>
            <person name="Rutter S."/>
            <person name="Seeger K."/>
            <person name="Skelton S."/>
            <person name="Squares S."/>
            <person name="Squares R."/>
            <person name="Sulston J.E."/>
            <person name="Taylor K."/>
            <person name="Whitehead S."/>
            <person name="Barrell B.G."/>
        </authorList>
    </citation>
    <scope>NUCLEOTIDE SEQUENCE [LARGE SCALE GENOMIC DNA]</scope>
    <source>
        <strain>ATCC 25618 / H37Rv</strain>
    </source>
</reference>
<reference key="2">
    <citation type="journal article" date="2022" name="Genomics">
        <title>Deep N-terminomics of Mycobacterium tuberculosis H37Rv extensively correct annotated encoding genes.</title>
        <authorList>
            <person name="Shi J."/>
            <person name="Meng S."/>
            <person name="Wan L."/>
            <person name="Zhang Z."/>
            <person name="Jiang S."/>
            <person name="Zhu H."/>
            <person name="Dai E."/>
            <person name="Chang L."/>
            <person name="Gao H."/>
            <person name="Wan K."/>
            <person name="Zhang L."/>
            <person name="Zhao X."/>
            <person name="Liu H."/>
            <person name="Lyu Z."/>
            <person name="Zhang Y."/>
            <person name="Xu P."/>
        </authorList>
    </citation>
    <scope>PROTEIN SEQUENCE OF 7-27</scope>
    <scope>SEQUENCE REVISION TO N-TERMINUS</scope>
    <source>
        <strain>H37Rv</strain>
    </source>
</reference>
<reference key="3">
    <citation type="journal article" date="2011" name="Mol. Cell. Proteomics">
        <title>Proteogenomic analysis of Mycobacterium tuberculosis by high resolution mass spectrometry.</title>
        <authorList>
            <person name="Kelkar D.S."/>
            <person name="Kumar D."/>
            <person name="Kumar P."/>
            <person name="Balakrishnan L."/>
            <person name="Muthusamy B."/>
            <person name="Yadav A.K."/>
            <person name="Shrivastava P."/>
            <person name="Marimuthu A."/>
            <person name="Anand S."/>
            <person name="Sundaram H."/>
            <person name="Kingsbury R."/>
            <person name="Harsha H.C."/>
            <person name="Nair B."/>
            <person name="Prasad T.S."/>
            <person name="Chauhan D.S."/>
            <person name="Katoch K."/>
            <person name="Katoch V.M."/>
            <person name="Kumar P."/>
            <person name="Chaerkady R."/>
            <person name="Ramachandran S."/>
            <person name="Dash D."/>
            <person name="Pandey A."/>
        </authorList>
    </citation>
    <scope>IDENTIFICATION BY MASS SPECTROMETRY [LARGE SCALE ANALYSIS]</scope>
    <source>
        <strain>ATCC 25618 / H37Rv</strain>
    </source>
</reference>
<keyword id="KW-0067">ATP-binding</keyword>
<keyword id="KW-0131">Cell cycle</keyword>
<keyword id="KW-0132">Cell division</keyword>
<keyword id="KW-0133">Cell shape</keyword>
<keyword id="KW-0961">Cell wall biogenesis/degradation</keyword>
<keyword id="KW-0963">Cytoplasm</keyword>
<keyword id="KW-0903">Direct protein sequencing</keyword>
<keyword id="KW-0436">Ligase</keyword>
<keyword id="KW-0547">Nucleotide-binding</keyword>
<keyword id="KW-0573">Peptidoglycan synthesis</keyword>
<keyword id="KW-1185">Reference proteome</keyword>
<accession>P9WJL5</accession>
<accession>L0TBN7</accession>
<accession>O06222</accession>
<feature type="chain" id="PRO_0000109046" description="UDP-N-acetylmuramoylalanine--D-glutamate ligase">
    <location>
        <begin position="1"/>
        <end position="496"/>
    </location>
</feature>
<feature type="binding site" evidence="1">
    <location>
        <begin position="130"/>
        <end position="136"/>
    </location>
    <ligand>
        <name>ATP</name>
        <dbReference type="ChEBI" id="CHEBI:30616"/>
    </ligand>
</feature>
<evidence type="ECO:0000255" key="1">
    <source>
        <dbReference type="HAMAP-Rule" id="MF_00639"/>
    </source>
</evidence>
<evidence type="ECO:0000269" key="2">
    <source>
    </source>
</evidence>
<sequence length="496" mass="50354">MSGLPRSVPDVLDPLGPGAPVLVAGGRVTGQAVAAVLTRFGATPTVCDDDPVMLRPHAERGLPTVSSSDAVQQITGYALVVASPGFSPATPLLAAAAAAGVPIWGDVELAWRLDAAGCYGPPRSWLVVTGTNGKTTTTSMLHAMLIAGGRRAVLCGNIGSAVLDVLDEPAELLAVELSSFQLHWAPSLRPEAGAVLNIAEDHLDWHATMAEYTAAKARVLTGGVAVAGLDDSRAAALLDGSPAQVRVGFRLGEPAARELGVRDAHLVDRAFSDDLTLLPVASIPVPGPVGVLDALAAAALARSVGVPAGAIADAVTSFRVGRHRAEVVAVADGITYVDDSKATNPHAARASVLAYPRVVWIAGGLLKGASLHAEVAAMASRLVGAVLIGRDRAAVAEALSRHAPDVPVVQVVAGEDTGMPATVEVPVACVLDVAKDDKAGETVGAAVMTAAVAAARRMAQPGDTVLLAPAGASFDQFTGYADRGEAFATAVRAVIR</sequence>
<protein>
    <recommendedName>
        <fullName evidence="1">UDP-N-acetylmuramoylalanine--D-glutamate ligase</fullName>
        <ecNumber evidence="1">6.3.2.9</ecNumber>
    </recommendedName>
    <alternativeName>
        <fullName evidence="1">D-glutamic acid-adding enzyme</fullName>
    </alternativeName>
    <alternativeName>
        <fullName evidence="1">UDP-N-acetylmuramoyl-L-alanyl-D-glutamate synthetase</fullName>
    </alternativeName>
</protein>
<comment type="function">
    <text evidence="1">Cell wall formation. Catalyzes the addition of glutamate to the nucleotide precursor UDP-N-acetylmuramoyl-L-alanine (UMA).</text>
</comment>
<comment type="catalytic activity">
    <reaction evidence="1">
        <text>UDP-N-acetyl-alpha-D-muramoyl-L-alanine + D-glutamate + ATP = UDP-N-acetyl-alpha-D-muramoyl-L-alanyl-D-glutamate + ADP + phosphate + H(+)</text>
        <dbReference type="Rhea" id="RHEA:16429"/>
        <dbReference type="ChEBI" id="CHEBI:15378"/>
        <dbReference type="ChEBI" id="CHEBI:29986"/>
        <dbReference type="ChEBI" id="CHEBI:30616"/>
        <dbReference type="ChEBI" id="CHEBI:43474"/>
        <dbReference type="ChEBI" id="CHEBI:83898"/>
        <dbReference type="ChEBI" id="CHEBI:83900"/>
        <dbReference type="ChEBI" id="CHEBI:456216"/>
        <dbReference type="EC" id="6.3.2.9"/>
    </reaction>
</comment>
<comment type="pathway">
    <text evidence="1">Cell wall biogenesis; peptidoglycan biosynthesis.</text>
</comment>
<comment type="subcellular location">
    <subcellularLocation>
        <location evidence="1">Cytoplasm</location>
    </subcellularLocation>
</comment>
<comment type="similarity">
    <text evidence="1">Belongs to the MurCDEF family.</text>
</comment>
<comment type="sequence caution" evidence="2">
    <conflict type="erroneous initiation">
        <sequence resource="EMBL-CDS" id="CCP44931"/>
    </conflict>
    <text>Truncated N-terminus.</text>
</comment>
<name>MURD_MYCTU</name>
<gene>
    <name evidence="1" type="primary">murD</name>
    <name type="ordered locus">Rv2155c</name>
    <name type="ORF">MTCY270.13</name>
</gene>
<organism>
    <name type="scientific">Mycobacterium tuberculosis (strain ATCC 25618 / H37Rv)</name>
    <dbReference type="NCBI Taxonomy" id="83332"/>
    <lineage>
        <taxon>Bacteria</taxon>
        <taxon>Bacillati</taxon>
        <taxon>Actinomycetota</taxon>
        <taxon>Actinomycetes</taxon>
        <taxon>Mycobacteriales</taxon>
        <taxon>Mycobacteriaceae</taxon>
        <taxon>Mycobacterium</taxon>
        <taxon>Mycobacterium tuberculosis complex</taxon>
    </lineage>
</organism>
<dbReference type="EC" id="6.3.2.9" evidence="1"/>
<dbReference type="EMBL" id="AL123456">
    <property type="protein sequence ID" value="CCP44931.1"/>
    <property type="status" value="ALT_INIT"/>
    <property type="molecule type" value="Genomic_DNA"/>
</dbReference>
<dbReference type="PIR" id="G70579">
    <property type="entry name" value="G70579"/>
</dbReference>
<dbReference type="RefSeq" id="NP_216671.3">
    <property type="nucleotide sequence ID" value="NC_000962.3"/>
</dbReference>
<dbReference type="SMR" id="P9WJL5"/>
<dbReference type="FunCoup" id="P9WJL5">
    <property type="interactions" value="99"/>
</dbReference>
<dbReference type="STRING" id="83332.Rv2155c"/>
<dbReference type="PaxDb" id="83332-Rv2155c"/>
<dbReference type="DNASU" id="888000"/>
<dbReference type="GeneID" id="888000"/>
<dbReference type="KEGG" id="mtu:Rv2155c"/>
<dbReference type="TubercuList" id="Rv2155c"/>
<dbReference type="eggNOG" id="COG0771">
    <property type="taxonomic scope" value="Bacteria"/>
</dbReference>
<dbReference type="InParanoid" id="P9WJL5"/>
<dbReference type="OrthoDB" id="9809796at2"/>
<dbReference type="BioCyc" id="MetaCyc:G185E-6363-MONOMER"/>
<dbReference type="UniPathway" id="UPA00219"/>
<dbReference type="Proteomes" id="UP000001584">
    <property type="component" value="Chromosome"/>
</dbReference>
<dbReference type="GO" id="GO:0005829">
    <property type="term" value="C:cytosol"/>
    <property type="evidence" value="ECO:0007005"/>
    <property type="project" value="MTBBASE"/>
</dbReference>
<dbReference type="GO" id="GO:0005524">
    <property type="term" value="F:ATP binding"/>
    <property type="evidence" value="ECO:0007669"/>
    <property type="project" value="UniProtKB-UniRule"/>
</dbReference>
<dbReference type="GO" id="GO:0008764">
    <property type="term" value="F:UDP-N-acetylmuramoylalanine-D-glutamate ligase activity"/>
    <property type="evidence" value="ECO:0007669"/>
    <property type="project" value="UniProtKB-UniRule"/>
</dbReference>
<dbReference type="GO" id="GO:0051301">
    <property type="term" value="P:cell division"/>
    <property type="evidence" value="ECO:0007669"/>
    <property type="project" value="UniProtKB-KW"/>
</dbReference>
<dbReference type="GO" id="GO:0071555">
    <property type="term" value="P:cell wall organization"/>
    <property type="evidence" value="ECO:0007669"/>
    <property type="project" value="UniProtKB-KW"/>
</dbReference>
<dbReference type="GO" id="GO:0009252">
    <property type="term" value="P:peptidoglycan biosynthetic process"/>
    <property type="evidence" value="ECO:0007669"/>
    <property type="project" value="UniProtKB-UniRule"/>
</dbReference>
<dbReference type="GO" id="GO:0008360">
    <property type="term" value="P:regulation of cell shape"/>
    <property type="evidence" value="ECO:0007669"/>
    <property type="project" value="UniProtKB-KW"/>
</dbReference>
<dbReference type="Gene3D" id="3.90.190.20">
    <property type="entry name" value="Mur ligase, C-terminal domain"/>
    <property type="match status" value="1"/>
</dbReference>
<dbReference type="Gene3D" id="3.40.1190.10">
    <property type="entry name" value="Mur-like, catalytic domain"/>
    <property type="match status" value="1"/>
</dbReference>
<dbReference type="Gene3D" id="3.40.50.720">
    <property type="entry name" value="NAD(P)-binding Rossmann-like Domain"/>
    <property type="match status" value="1"/>
</dbReference>
<dbReference type="HAMAP" id="MF_00639">
    <property type="entry name" value="MurD"/>
    <property type="match status" value="1"/>
</dbReference>
<dbReference type="InterPro" id="IPR036565">
    <property type="entry name" value="Mur-like_cat_sf"/>
</dbReference>
<dbReference type="InterPro" id="IPR004101">
    <property type="entry name" value="Mur_ligase_C"/>
</dbReference>
<dbReference type="InterPro" id="IPR036615">
    <property type="entry name" value="Mur_ligase_C_dom_sf"/>
</dbReference>
<dbReference type="InterPro" id="IPR013221">
    <property type="entry name" value="Mur_ligase_cen"/>
</dbReference>
<dbReference type="InterPro" id="IPR005762">
    <property type="entry name" value="MurD"/>
</dbReference>
<dbReference type="NCBIfam" id="TIGR01087">
    <property type="entry name" value="murD"/>
    <property type="match status" value="1"/>
</dbReference>
<dbReference type="PANTHER" id="PTHR43692">
    <property type="entry name" value="UDP-N-ACETYLMURAMOYLALANINE--D-GLUTAMATE LIGASE"/>
    <property type="match status" value="1"/>
</dbReference>
<dbReference type="PANTHER" id="PTHR43692:SF1">
    <property type="entry name" value="UDP-N-ACETYLMURAMOYLALANINE--D-GLUTAMATE LIGASE"/>
    <property type="match status" value="1"/>
</dbReference>
<dbReference type="Pfam" id="PF02875">
    <property type="entry name" value="Mur_ligase_C"/>
    <property type="match status" value="1"/>
</dbReference>
<dbReference type="Pfam" id="PF08245">
    <property type="entry name" value="Mur_ligase_M"/>
    <property type="match status" value="1"/>
</dbReference>
<dbReference type="SUPFAM" id="SSF51984">
    <property type="entry name" value="MurCD N-terminal domain"/>
    <property type="match status" value="1"/>
</dbReference>
<dbReference type="SUPFAM" id="SSF53623">
    <property type="entry name" value="MurD-like peptide ligases, catalytic domain"/>
    <property type="match status" value="1"/>
</dbReference>
<dbReference type="SUPFAM" id="SSF53244">
    <property type="entry name" value="MurD-like peptide ligases, peptide-binding domain"/>
    <property type="match status" value="1"/>
</dbReference>
<proteinExistence type="evidence at protein level"/>